<dbReference type="EMBL" id="CP000614">
    <property type="protein sequence ID" value="ABO53029.1"/>
    <property type="molecule type" value="Genomic_DNA"/>
</dbReference>
<dbReference type="SMR" id="A4J9S6"/>
<dbReference type="KEGG" id="bvi:Bcep1808_0001"/>
<dbReference type="eggNOG" id="COG0593">
    <property type="taxonomic scope" value="Bacteria"/>
</dbReference>
<dbReference type="HOGENOM" id="CLU_026910_0_1_4"/>
<dbReference type="Proteomes" id="UP000002287">
    <property type="component" value="Chromosome 1"/>
</dbReference>
<dbReference type="GO" id="GO:0005737">
    <property type="term" value="C:cytoplasm"/>
    <property type="evidence" value="ECO:0007669"/>
    <property type="project" value="UniProtKB-SubCell"/>
</dbReference>
<dbReference type="GO" id="GO:0005886">
    <property type="term" value="C:plasma membrane"/>
    <property type="evidence" value="ECO:0007669"/>
    <property type="project" value="TreeGrafter"/>
</dbReference>
<dbReference type="GO" id="GO:0005524">
    <property type="term" value="F:ATP binding"/>
    <property type="evidence" value="ECO:0007669"/>
    <property type="project" value="UniProtKB-UniRule"/>
</dbReference>
<dbReference type="GO" id="GO:0016887">
    <property type="term" value="F:ATP hydrolysis activity"/>
    <property type="evidence" value="ECO:0007669"/>
    <property type="project" value="InterPro"/>
</dbReference>
<dbReference type="GO" id="GO:0003688">
    <property type="term" value="F:DNA replication origin binding"/>
    <property type="evidence" value="ECO:0007669"/>
    <property type="project" value="UniProtKB-UniRule"/>
</dbReference>
<dbReference type="GO" id="GO:0008289">
    <property type="term" value="F:lipid binding"/>
    <property type="evidence" value="ECO:0007669"/>
    <property type="project" value="UniProtKB-KW"/>
</dbReference>
<dbReference type="GO" id="GO:0006270">
    <property type="term" value="P:DNA replication initiation"/>
    <property type="evidence" value="ECO:0007669"/>
    <property type="project" value="UniProtKB-UniRule"/>
</dbReference>
<dbReference type="GO" id="GO:0006275">
    <property type="term" value="P:regulation of DNA replication"/>
    <property type="evidence" value="ECO:0007669"/>
    <property type="project" value="UniProtKB-UniRule"/>
</dbReference>
<dbReference type="CDD" id="cd00009">
    <property type="entry name" value="AAA"/>
    <property type="match status" value="1"/>
</dbReference>
<dbReference type="CDD" id="cd06571">
    <property type="entry name" value="Bac_DnaA_C"/>
    <property type="match status" value="1"/>
</dbReference>
<dbReference type="FunFam" id="1.10.8.60:FF:000003">
    <property type="entry name" value="Chromosomal replication initiator protein DnaA"/>
    <property type="match status" value="1"/>
</dbReference>
<dbReference type="FunFam" id="3.40.50.300:FF:000668">
    <property type="entry name" value="Chromosomal replication initiator protein DnaA"/>
    <property type="match status" value="1"/>
</dbReference>
<dbReference type="Gene3D" id="1.10.1750.10">
    <property type="match status" value="1"/>
</dbReference>
<dbReference type="Gene3D" id="1.10.8.60">
    <property type="match status" value="1"/>
</dbReference>
<dbReference type="Gene3D" id="3.30.300.180">
    <property type="match status" value="1"/>
</dbReference>
<dbReference type="Gene3D" id="3.40.50.300">
    <property type="entry name" value="P-loop containing nucleotide triphosphate hydrolases"/>
    <property type="match status" value="1"/>
</dbReference>
<dbReference type="HAMAP" id="MF_00377">
    <property type="entry name" value="DnaA_bact"/>
    <property type="match status" value="1"/>
</dbReference>
<dbReference type="InterPro" id="IPR003593">
    <property type="entry name" value="AAA+_ATPase"/>
</dbReference>
<dbReference type="InterPro" id="IPR001957">
    <property type="entry name" value="Chromosome_initiator_DnaA"/>
</dbReference>
<dbReference type="InterPro" id="IPR020591">
    <property type="entry name" value="Chromosome_initiator_DnaA-like"/>
</dbReference>
<dbReference type="InterPro" id="IPR018312">
    <property type="entry name" value="Chromosome_initiator_DnaA_CS"/>
</dbReference>
<dbReference type="InterPro" id="IPR013159">
    <property type="entry name" value="DnaA_C"/>
</dbReference>
<dbReference type="InterPro" id="IPR013317">
    <property type="entry name" value="DnaA_dom"/>
</dbReference>
<dbReference type="InterPro" id="IPR024633">
    <property type="entry name" value="DnaA_N_dom"/>
</dbReference>
<dbReference type="InterPro" id="IPR038454">
    <property type="entry name" value="DnaA_N_sf"/>
</dbReference>
<dbReference type="InterPro" id="IPR027417">
    <property type="entry name" value="P-loop_NTPase"/>
</dbReference>
<dbReference type="InterPro" id="IPR010921">
    <property type="entry name" value="Trp_repressor/repl_initiator"/>
</dbReference>
<dbReference type="NCBIfam" id="TIGR00362">
    <property type="entry name" value="DnaA"/>
    <property type="match status" value="1"/>
</dbReference>
<dbReference type="PANTHER" id="PTHR30050">
    <property type="entry name" value="CHROMOSOMAL REPLICATION INITIATOR PROTEIN DNAA"/>
    <property type="match status" value="1"/>
</dbReference>
<dbReference type="PANTHER" id="PTHR30050:SF2">
    <property type="entry name" value="CHROMOSOMAL REPLICATION INITIATOR PROTEIN DNAA"/>
    <property type="match status" value="1"/>
</dbReference>
<dbReference type="Pfam" id="PF00308">
    <property type="entry name" value="Bac_DnaA"/>
    <property type="match status" value="1"/>
</dbReference>
<dbReference type="Pfam" id="PF08299">
    <property type="entry name" value="Bac_DnaA_C"/>
    <property type="match status" value="1"/>
</dbReference>
<dbReference type="Pfam" id="PF11638">
    <property type="entry name" value="DnaA_N"/>
    <property type="match status" value="1"/>
</dbReference>
<dbReference type="PRINTS" id="PR00051">
    <property type="entry name" value="DNAA"/>
</dbReference>
<dbReference type="SMART" id="SM00382">
    <property type="entry name" value="AAA"/>
    <property type="match status" value="1"/>
</dbReference>
<dbReference type="SMART" id="SM00760">
    <property type="entry name" value="Bac_DnaA_C"/>
    <property type="match status" value="1"/>
</dbReference>
<dbReference type="SUPFAM" id="SSF52540">
    <property type="entry name" value="P-loop containing nucleoside triphosphate hydrolases"/>
    <property type="match status" value="1"/>
</dbReference>
<dbReference type="SUPFAM" id="SSF48295">
    <property type="entry name" value="TrpR-like"/>
    <property type="match status" value="1"/>
</dbReference>
<dbReference type="PROSITE" id="PS01008">
    <property type="entry name" value="DNAA"/>
    <property type="match status" value="1"/>
</dbReference>
<accession>A4J9S6</accession>
<comment type="function">
    <text evidence="1">Plays an essential role in the initiation and regulation of chromosomal replication. ATP-DnaA binds to the origin of replication (oriC) to initiate formation of the DNA replication initiation complex once per cell cycle. Binds the DnaA box (a 9 base pair repeat at the origin) and separates the double-stranded (ds)DNA. Forms a right-handed helical filament on oriC DNA; dsDNA binds to the exterior of the filament while single-stranded (ss)DNA is stabiized in the filament's interior. The ATP-DnaA-oriC complex binds and stabilizes one strand of the AT-rich DNA unwinding element (DUE), permitting loading of DNA polymerase. After initiation quickly degrades to an ADP-DnaA complex that is not apt for DNA replication. Binds acidic phospholipids.</text>
</comment>
<comment type="subunit">
    <text evidence="1">Oligomerizes as a right-handed, spiral filament on DNA at oriC.</text>
</comment>
<comment type="subcellular location">
    <subcellularLocation>
        <location evidence="1">Cytoplasm</location>
    </subcellularLocation>
</comment>
<comment type="domain">
    <text evidence="1">Domain I is involved in oligomerization and binding regulators, domain II is flexibile and of varying length in different bacteria, domain III forms the AAA+ region, while domain IV binds dsDNA.</text>
</comment>
<comment type="similarity">
    <text evidence="1">Belongs to the DnaA family.</text>
</comment>
<reference key="1">
    <citation type="submission" date="2007-03" db="EMBL/GenBank/DDBJ databases">
        <title>Complete sequence of chromosome 1 of Burkholderia vietnamiensis G4.</title>
        <authorList>
            <consortium name="US DOE Joint Genome Institute"/>
            <person name="Copeland A."/>
            <person name="Lucas S."/>
            <person name="Lapidus A."/>
            <person name="Barry K."/>
            <person name="Detter J.C."/>
            <person name="Glavina del Rio T."/>
            <person name="Hammon N."/>
            <person name="Israni S."/>
            <person name="Dalin E."/>
            <person name="Tice H."/>
            <person name="Pitluck S."/>
            <person name="Chain P."/>
            <person name="Malfatti S."/>
            <person name="Shin M."/>
            <person name="Vergez L."/>
            <person name="Schmutz J."/>
            <person name="Larimer F."/>
            <person name="Land M."/>
            <person name="Hauser L."/>
            <person name="Kyrpides N."/>
            <person name="Tiedje J."/>
            <person name="Richardson P."/>
        </authorList>
    </citation>
    <scope>NUCLEOTIDE SEQUENCE [LARGE SCALE GENOMIC DNA]</scope>
    <source>
        <strain>G4 / LMG 22486</strain>
    </source>
</reference>
<keyword id="KW-0067">ATP-binding</keyword>
<keyword id="KW-0963">Cytoplasm</keyword>
<keyword id="KW-0235">DNA replication</keyword>
<keyword id="KW-0238">DNA-binding</keyword>
<keyword id="KW-0446">Lipid-binding</keyword>
<keyword id="KW-0547">Nucleotide-binding</keyword>
<proteinExistence type="inferred from homology"/>
<sequence>MNDFWQHCSALLERELTPQQYVTWIKPLAPVAFDASANTLSIAAPNRFKLDWVKSQFSGRIADLAREFWNTPIEVQFVLDPKAGMRGAPAGVAPAAPRMPLTPNGPAAAVAAIAANLTAHASAAPSAPADVPLTPSAAAAHHLHGDDADIDLPSLPAHEAAAGRRTWRPGPGAAPANGAEADSMYERSKLNPVLTFDNFVTGKANQLARAAAIQVAHNPGISYNPLFLYGGVGLGKTHLIHAIGNQLLLDKAGARIRYIHAEQYVSDVVKAYQRKAFDDFKRYYHSLDLLLIDDIQFFSGKSRTQEEFFYAFEALVANKAQVIITSDTYPKEISGIDDRLISRFDSGLTVAIEPPELEMRVAILMRKAQSEGVNLSEDVAFFVAKHLRSNVRELEGALRKILAYSKFHGREISIELTKEALKDLLTVQNRQISVENIQKTVADFYNIKVADMYSKKRPANIARPRQIAMYLAKELTQKSLPEIGELFGGRDHTTVLHAVRKIADERGKDAQLNHELHVLEQTLKG</sequence>
<organism>
    <name type="scientific">Burkholderia vietnamiensis (strain G4 / LMG 22486)</name>
    <name type="common">Burkholderia cepacia (strain R1808)</name>
    <dbReference type="NCBI Taxonomy" id="269482"/>
    <lineage>
        <taxon>Bacteria</taxon>
        <taxon>Pseudomonadati</taxon>
        <taxon>Pseudomonadota</taxon>
        <taxon>Betaproteobacteria</taxon>
        <taxon>Burkholderiales</taxon>
        <taxon>Burkholderiaceae</taxon>
        <taxon>Burkholderia</taxon>
        <taxon>Burkholderia cepacia complex</taxon>
    </lineage>
</organism>
<feature type="chain" id="PRO_1000048623" description="Chromosomal replication initiator protein DnaA">
    <location>
        <begin position="1"/>
        <end position="525"/>
    </location>
</feature>
<feature type="region of interest" description="Domain I, interacts with DnaA modulators" evidence="1">
    <location>
        <begin position="1"/>
        <end position="71"/>
    </location>
</feature>
<feature type="region of interest" description="Domain II" evidence="1">
    <location>
        <begin position="71"/>
        <end position="188"/>
    </location>
</feature>
<feature type="region of interest" description="Disordered" evidence="2">
    <location>
        <begin position="160"/>
        <end position="181"/>
    </location>
</feature>
<feature type="region of interest" description="Domain III, AAA+ region" evidence="1">
    <location>
        <begin position="189"/>
        <end position="405"/>
    </location>
</feature>
<feature type="region of interest" description="Domain IV, binds dsDNA" evidence="1">
    <location>
        <begin position="406"/>
        <end position="525"/>
    </location>
</feature>
<feature type="compositionally biased region" description="Low complexity" evidence="2">
    <location>
        <begin position="169"/>
        <end position="181"/>
    </location>
</feature>
<feature type="binding site" evidence="1">
    <location>
        <position position="233"/>
    </location>
    <ligand>
        <name>ATP</name>
        <dbReference type="ChEBI" id="CHEBI:30616"/>
    </ligand>
</feature>
<feature type="binding site" evidence="1">
    <location>
        <position position="235"/>
    </location>
    <ligand>
        <name>ATP</name>
        <dbReference type="ChEBI" id="CHEBI:30616"/>
    </ligand>
</feature>
<feature type="binding site" evidence="1">
    <location>
        <position position="236"/>
    </location>
    <ligand>
        <name>ATP</name>
        <dbReference type="ChEBI" id="CHEBI:30616"/>
    </ligand>
</feature>
<feature type="binding site" evidence="1">
    <location>
        <position position="237"/>
    </location>
    <ligand>
        <name>ATP</name>
        <dbReference type="ChEBI" id="CHEBI:30616"/>
    </ligand>
</feature>
<protein>
    <recommendedName>
        <fullName evidence="1">Chromosomal replication initiator protein DnaA</fullName>
    </recommendedName>
</protein>
<name>DNAA_BURVG</name>
<gene>
    <name evidence="1" type="primary">dnaA</name>
    <name type="ordered locus">Bcep1808_0001</name>
</gene>
<evidence type="ECO:0000255" key="1">
    <source>
        <dbReference type="HAMAP-Rule" id="MF_00377"/>
    </source>
</evidence>
<evidence type="ECO:0000256" key="2">
    <source>
        <dbReference type="SAM" id="MobiDB-lite"/>
    </source>
</evidence>